<dbReference type="EC" id="3.6.4.13"/>
<dbReference type="EMBL" id="AY653733">
    <property type="protein sequence ID" value="AAV50802.1"/>
    <property type="molecule type" value="Genomic_DNA"/>
</dbReference>
<dbReference type="SMR" id="Q5UQ98"/>
<dbReference type="Proteomes" id="UP000001134">
    <property type="component" value="Genome"/>
</dbReference>
<dbReference type="GO" id="GO:0044423">
    <property type="term" value="C:virion component"/>
    <property type="evidence" value="ECO:0007669"/>
    <property type="project" value="UniProtKB-KW"/>
</dbReference>
<dbReference type="GO" id="GO:0005524">
    <property type="term" value="F:ATP binding"/>
    <property type="evidence" value="ECO:0007669"/>
    <property type="project" value="UniProtKB-KW"/>
</dbReference>
<dbReference type="GO" id="GO:0016887">
    <property type="term" value="F:ATP hydrolysis activity"/>
    <property type="evidence" value="ECO:0007669"/>
    <property type="project" value="RHEA"/>
</dbReference>
<dbReference type="GO" id="GO:0004520">
    <property type="term" value="F:DNA endonuclease activity"/>
    <property type="evidence" value="ECO:0007669"/>
    <property type="project" value="TreeGrafter"/>
</dbReference>
<dbReference type="GO" id="GO:0003724">
    <property type="term" value="F:RNA helicase activity"/>
    <property type="evidence" value="ECO:0007669"/>
    <property type="project" value="UniProtKB-EC"/>
</dbReference>
<dbReference type="GO" id="GO:0006281">
    <property type="term" value="P:DNA repair"/>
    <property type="evidence" value="ECO:0007669"/>
    <property type="project" value="TreeGrafter"/>
</dbReference>
<dbReference type="GO" id="GO:0031297">
    <property type="term" value="P:replication fork processing"/>
    <property type="evidence" value="ECO:0007669"/>
    <property type="project" value="TreeGrafter"/>
</dbReference>
<dbReference type="CDD" id="cd18793">
    <property type="entry name" value="SF2_C_SNF"/>
    <property type="match status" value="1"/>
</dbReference>
<dbReference type="Gene3D" id="3.40.50.300">
    <property type="entry name" value="P-loop containing nucleotide triphosphate hydrolases"/>
    <property type="match status" value="2"/>
</dbReference>
<dbReference type="InterPro" id="IPR014001">
    <property type="entry name" value="Helicase_ATP-bd"/>
</dbReference>
<dbReference type="InterPro" id="IPR001650">
    <property type="entry name" value="Helicase_C-like"/>
</dbReference>
<dbReference type="InterPro" id="IPR027417">
    <property type="entry name" value="P-loop_NTPase"/>
</dbReference>
<dbReference type="InterPro" id="IPR049730">
    <property type="entry name" value="SNF2/RAD54-like_C"/>
</dbReference>
<dbReference type="InterPro" id="IPR000330">
    <property type="entry name" value="SNF2_N"/>
</dbReference>
<dbReference type="PANTHER" id="PTHR45766:SF3">
    <property type="entry name" value="DNA ANNEALING HELICASE AND ENDONUCLEASE ZRANB3"/>
    <property type="match status" value="1"/>
</dbReference>
<dbReference type="PANTHER" id="PTHR45766">
    <property type="entry name" value="DNA ANNEALING HELICASE AND ENDONUCLEASE ZRANB3 FAMILY MEMBER"/>
    <property type="match status" value="1"/>
</dbReference>
<dbReference type="Pfam" id="PF00271">
    <property type="entry name" value="Helicase_C"/>
    <property type="match status" value="1"/>
</dbReference>
<dbReference type="Pfam" id="PF00176">
    <property type="entry name" value="SNF2-rel_dom"/>
    <property type="match status" value="1"/>
</dbReference>
<dbReference type="SMART" id="SM00487">
    <property type="entry name" value="DEXDc"/>
    <property type="match status" value="1"/>
</dbReference>
<dbReference type="SMART" id="SM00490">
    <property type="entry name" value="HELICc"/>
    <property type="match status" value="1"/>
</dbReference>
<dbReference type="SUPFAM" id="SSF52540">
    <property type="entry name" value="P-loop containing nucleoside triphosphate hydrolases"/>
    <property type="match status" value="1"/>
</dbReference>
<dbReference type="PROSITE" id="PS51192">
    <property type="entry name" value="HELICASE_ATP_BIND_1"/>
    <property type="match status" value="1"/>
</dbReference>
<dbReference type="PROSITE" id="PS51194">
    <property type="entry name" value="HELICASE_CTER"/>
    <property type="match status" value="1"/>
</dbReference>
<comment type="catalytic activity">
    <reaction>
        <text>ATP + H2O = ADP + phosphate + H(+)</text>
        <dbReference type="Rhea" id="RHEA:13065"/>
        <dbReference type="ChEBI" id="CHEBI:15377"/>
        <dbReference type="ChEBI" id="CHEBI:15378"/>
        <dbReference type="ChEBI" id="CHEBI:30616"/>
        <dbReference type="ChEBI" id="CHEBI:43474"/>
        <dbReference type="ChEBI" id="CHEBI:456216"/>
        <dbReference type="EC" id="3.6.4.13"/>
    </reaction>
</comment>
<comment type="subcellular location">
    <subcellularLocation>
        <location evidence="3">Virion</location>
    </subcellularLocation>
</comment>
<comment type="similarity">
    <text evidence="4">Belongs to the DEAD box helicase family. DEAH subfamily.</text>
</comment>
<keyword id="KW-0067">ATP-binding</keyword>
<keyword id="KW-0347">Helicase</keyword>
<keyword id="KW-0378">Hydrolase</keyword>
<keyword id="KW-0547">Nucleotide-binding</keyword>
<keyword id="KW-1185">Reference proteome</keyword>
<keyword id="KW-0946">Virion</keyword>
<protein>
    <recommendedName>
        <fullName>Putative ATP-dependent RNA helicase L538</fullName>
        <ecNumber>3.6.4.13</ecNumber>
    </recommendedName>
</protein>
<accession>Q5UQ98</accession>
<reference key="1">
    <citation type="journal article" date="2004" name="Science">
        <title>The 1.2-megabase genome sequence of Mimivirus.</title>
        <authorList>
            <person name="Raoult D."/>
            <person name="Audic S."/>
            <person name="Robert C."/>
            <person name="Abergel C."/>
            <person name="Renesto P."/>
            <person name="Ogata H."/>
            <person name="La Scola B."/>
            <person name="Susan M."/>
            <person name="Claverie J.-M."/>
        </authorList>
    </citation>
    <scope>NUCLEOTIDE SEQUENCE [GENOMIC DNA]</scope>
    <source>
        <strain>Rowbotham-Bradford</strain>
    </source>
</reference>
<reference key="2">
    <citation type="journal article" date="2006" name="J. Virol.">
        <title>Mimivirus giant particles incorporate a large fraction of anonymous and unique gene products.</title>
        <authorList>
            <person name="Renesto P."/>
            <person name="Abergel C."/>
            <person name="Decloquement P."/>
            <person name="Moinier D."/>
            <person name="Azza S."/>
            <person name="Ogata H."/>
            <person name="Fourquet P."/>
            <person name="Gorvel J.-P."/>
            <person name="Claverie J.-M."/>
            <person name="Raoult D."/>
        </authorList>
    </citation>
    <scope>IDENTIFICATION BY MASS SPECTROMETRY [LARGE SCALE ANALYSIS]</scope>
    <scope>SUBCELLULAR LOCATION</scope>
</reference>
<gene>
    <name type="ordered locus">MIMI_L538</name>
</gene>
<evidence type="ECO:0000255" key="1">
    <source>
        <dbReference type="PROSITE-ProRule" id="PRU00541"/>
    </source>
</evidence>
<evidence type="ECO:0000255" key="2">
    <source>
        <dbReference type="PROSITE-ProRule" id="PRU00542"/>
    </source>
</evidence>
<evidence type="ECO:0000269" key="3">
    <source>
    </source>
</evidence>
<evidence type="ECO:0000305" key="4"/>
<organism>
    <name type="scientific">Acanthamoeba polyphaga mimivirus</name>
    <name type="common">APMV</name>
    <dbReference type="NCBI Taxonomy" id="212035"/>
    <lineage>
        <taxon>Viruses</taxon>
        <taxon>Varidnaviria</taxon>
        <taxon>Bamfordvirae</taxon>
        <taxon>Nucleocytoviricota</taxon>
        <taxon>Megaviricetes</taxon>
        <taxon>Imitervirales</taxon>
        <taxon>Mimiviridae</taxon>
        <taxon>Megamimivirinae</taxon>
        <taxon>Mimivirus</taxon>
        <taxon>Mimivirus bradfordmassiliense</taxon>
    </lineage>
</organism>
<feature type="chain" id="PRO_0000253413" description="Putative ATP-dependent RNA helicase L538">
    <location>
        <begin position="1"/>
        <end position="445"/>
    </location>
</feature>
<feature type="domain" description="Helicase ATP-binding" evidence="1">
    <location>
        <begin position="14"/>
        <end position="151"/>
    </location>
</feature>
<feature type="domain" description="Helicase C-terminal" evidence="2">
    <location>
        <begin position="273"/>
        <end position="442"/>
    </location>
</feature>
<feature type="short sequence motif" description="DEAH box">
    <location>
        <begin position="101"/>
        <end position="104"/>
    </location>
</feature>
<feature type="binding site" evidence="1">
    <location>
        <begin position="27"/>
        <end position="34"/>
    </location>
    <ligand>
        <name>ATP</name>
        <dbReference type="ChEBI" id="CHEBI:30616"/>
    </ligand>
</feature>
<sequence length="445" mass="51580">MDSIILKNHQKKPIEFMKNNRGVILYHSTGAGKTLTAIYSVYQFDYPIIIIGPKSSKKAFTDNIEKAGMDISRFTFYTYTKIKMILESDITIFKNMSVIVDEAHSLRNENMYNLYISSALMLASKIILLTATPVVNYFNDLAVLVNIVRGEDSLPTERALFDQMFYDEETMTLINAPILFNKLLNTISYYKIIDTINYPTSESHIKQVEMDHLQIDEYKYYIKQILYSNENVPDNVDIFNINYGLLPSKKRNFFLNVTRQLSNVAKIADTSPKIEDIMKYIISGPYPIVIYSNFLKSGIYTLAVRLEKENISYKIISGFVSQDKLNMIVNNYNNGLFKVLLISSAGSESLDLKNTHQVHIMEPHWNESKIIQVIGRSIRYGSHISLPQNERKVDIYRWISIFPNQYRNISADEYLTTLSQRKMELWNKYNQIVIDASIENNYFAK</sequence>
<organismHost>
    <name type="scientific">Acanthamoeba polyphaga</name>
    <name type="common">Amoeba</name>
    <dbReference type="NCBI Taxonomy" id="5757"/>
</organismHost>
<proteinExistence type="evidence at protein level"/>
<name>YL538_MIMIV</name>